<comment type="function">
    <text evidence="1 2">U6 snRNP-binding protein that functions as a recycling factor of the splicing machinery. Promotes the initial reassembly of U4 and U6 snRNPs following their ejection from the spliceosome during its maturation. Also binds U6atac snRNPs and may function as a recycling factor for U4atac/U6atac spliceosomal snRNP, an initial step in the assembly of U12-type spliceosomal complex. The U12-type spliceosomal complex plays a role in the splicing of introns with non-canonical splice sites. May also function as a substrate-targeting factor for deubiquitinases like USP4 and USP15. Recruits USP4 to ubiquitinated PRPF3 within the U4/U5/U6 tri-snRNP complex, promoting PRPF3 deubiquitination and thereby regulating the spliceosome U4/U5/U6 tri-snRNP spliceosomal complex disassembly. May also recruit the deubiquitinase USP15 to histone H2B and mediate histone deubiquitination, thereby regulating gene expression and/or DNA repair. May play a role in hematopoiesis probably through transcription regulation of specific genes including MYC.</text>
</comment>
<comment type="subunit">
    <text evidence="1">Component of the 7SK snRNP complex at least composed of P-TEFb (composed of CDK9 and CCNT1/cyclin-T1), HEXIM1, HEXIM2, BCDIN3, SART3 proteins and 7SK and U6 snRNAs. Interacts with AGO1 and AGO2. Interacts with PRPF3 and USP4; the interaction with PRPF3 is direct and recruits USP4 to its substrate PRPF3. Interacts with USP15; the interaction is direct.</text>
</comment>
<comment type="subcellular location">
    <subcellularLocation>
        <location evidence="1">Nucleus</location>
        <location evidence="1">Nucleoplasm</location>
    </subcellularLocation>
    <subcellularLocation>
        <location evidence="1">Nucleus</location>
        <location evidence="1">Cajal body</location>
    </subcellularLocation>
    <subcellularLocation>
        <location evidence="1">Nucleus speckle</location>
    </subcellularLocation>
    <subcellularLocation>
        <location evidence="1">Cytoplasm</location>
    </subcellularLocation>
</comment>
<comment type="alternative products">
    <event type="alternative splicing"/>
    <isoform>
        <id>Q5REG1-1</id>
        <name evidence="7">1</name>
        <sequence type="displayed"/>
    </isoform>
    <isoform>
        <id>Q5REG1-2</id>
        <name evidence="7">2</name>
        <sequence type="described" ref="VSP_062557"/>
    </isoform>
</comment>
<sequence>MATAAATSASEPEAESKAGPKADGEEDEVKAARTRRKVLSRAVAAATYKTMGPGWDQQEEGVSESDGDEYAMASSAESSPGEYEWEYDEEEEKNQLEIERLEEQLSINVYDYNCHVDLIRLLRLEGELTKVRMARQKMSEIFPLTEELWLEWLHDEISMAQDGLDREHVYDLFEKAVKDYICPNIWLEYGQYSVGGIGQKGGLEKVRSVFERALSSVGLHMSKGLALWEAYREFESAIVEAARLEKVHSLFRRQLAIPLYDMEATFAEYEEWSEDPIPESVIQNYNKALQQLEKYKPYEEALLQAEAPRLAEYQAYIDFEMKIGDPARIQLIFERALVENCLVPDLWIRYSQYLDRQLKVKDLVLSVHNRAIRNCPWTVALWSRYLLAMERHGVDHQVISVTFEKALNAGFIQATDYVEIWQAYLDYLRRRVDFKQDSSKELEELRAAFTRALEYLKQEVEERFNESGDPSCVIMQNWARIEARLCNNMQKARELWDSIMTRGNAKYANMWLEYYNLERAHGDTQHCRKALHRAVQCTSDYPEHVCEVLLTMERTEGSLEDWDIAVQKTETRLARVNEQRMKAAEKEAALVQQEEEKAEQRKRARAEKKALKKKKKIRGPEKRGADEDDEKEWGDDEEEQPSKRRRVENSIPAAGETQNVEVAPGPAGKCAAVDVEPPSKQKEKAASLKRDMPKVLHDSSKDSITVFVSNLPYSMQEPDAKLRPLFEACGEVVQIRPIFSNRGDFRGYCYVEFKEEKSALQALEMDRKSVEGRPMFVSPCVDKSKNPDFKVFRYSTSLEKHKLFISGLPFSCTKEELEEICKAHGTVKDLRLVTNRAGKPKGLAYVEYENESQASQAVMKMDGMTIKENVIKVAISNPPQRKVPEKPETRKAPGGPTLLPQTYGARGKGRTQLSLLPRALQRPGAAAPQAENGPAAAPAVAAPAATEAPKMSNADFAKLFLRK</sequence>
<proteinExistence type="evidence at transcript level"/>
<protein>
    <recommendedName>
        <fullName evidence="1">Spliceosome associated factor 3, U4/U6 recycling protein</fullName>
    </recommendedName>
    <alternativeName>
        <fullName evidence="7">Squamous cell carcinoma antigen recognized by T-cells 3</fullName>
        <shortName evidence="7">SART-3</shortName>
    </alternativeName>
</protein>
<feature type="initiator methionine" description="Removed" evidence="1">
    <location>
        <position position="1"/>
    </location>
</feature>
<feature type="chain" id="PRO_0000223315" description="Spliceosome associated factor 3, U4/U6 recycling protein">
    <location>
        <begin position="2"/>
        <end position="963"/>
    </location>
</feature>
<feature type="repeat" description="HAT 1" evidence="3">
    <location>
        <begin position="126"/>
        <end position="158"/>
    </location>
</feature>
<feature type="repeat" description="HAT 2" evidence="3">
    <location>
        <begin position="164"/>
        <end position="195"/>
    </location>
</feature>
<feature type="repeat" description="HAT 3" evidence="3">
    <location>
        <begin position="201"/>
        <end position="237"/>
    </location>
</feature>
<feature type="repeat" description="HAT 4" evidence="3">
    <location>
        <begin position="242"/>
        <end position="275"/>
    </location>
</feature>
<feature type="repeat" description="HAT 5" evidence="3">
    <location>
        <begin position="324"/>
        <end position="356"/>
    </location>
</feature>
<feature type="repeat" description="HAT 6" evidence="3">
    <location>
        <begin position="359"/>
        <end position="391"/>
    </location>
</feature>
<feature type="repeat" description="HAT 7" evidence="3">
    <location>
        <begin position="394"/>
        <end position="430"/>
    </location>
</feature>
<feature type="repeat" description="HAT 8" evidence="3">
    <location>
        <begin position="487"/>
        <end position="520"/>
    </location>
</feature>
<feature type="domain" description="RRM 1" evidence="4">
    <location>
        <begin position="704"/>
        <end position="782"/>
    </location>
</feature>
<feature type="domain" description="RRM 2" evidence="4">
    <location>
        <begin position="801"/>
        <end position="878"/>
    </location>
</feature>
<feature type="region of interest" description="Disordered" evidence="6">
    <location>
        <begin position="1"/>
        <end position="36"/>
    </location>
</feature>
<feature type="region of interest" description="Mediates interaction with PRPF3" evidence="1">
    <location>
        <begin position="2"/>
        <end position="351"/>
    </location>
</feature>
<feature type="region of interest" description="Disordered" evidence="6">
    <location>
        <begin position="49"/>
        <end position="86"/>
    </location>
</feature>
<feature type="region of interest" description="Required for interaction with USP4" evidence="1">
    <location>
        <begin position="487"/>
        <end position="520"/>
    </location>
</feature>
<feature type="region of interest" description="Necessary and sufficient for U6 snRNA binding" evidence="1">
    <location>
        <begin position="537"/>
        <end position="953"/>
    </location>
</feature>
<feature type="region of interest" description="Required for nuclear localization" evidence="1">
    <location>
        <begin position="600"/>
        <end position="670"/>
    </location>
</feature>
<feature type="region of interest" description="Disordered" evidence="6">
    <location>
        <begin position="608"/>
        <end position="712"/>
    </location>
</feature>
<feature type="coiled-coil region" evidence="3">
    <location>
        <begin position="21"/>
        <end position="46"/>
    </location>
</feature>
<feature type="coiled-coil region" evidence="3">
    <location>
        <begin position="82"/>
        <end position="110"/>
    </location>
</feature>
<feature type="coiled-coil region" evidence="3">
    <location>
        <begin position="559"/>
        <end position="619"/>
    </location>
</feature>
<feature type="short sequence motif" description="Nuclear localization signal" evidence="5">
    <location>
        <begin position="601"/>
        <end position="608"/>
    </location>
</feature>
<feature type="compositionally biased region" description="Low complexity" evidence="6">
    <location>
        <begin position="1"/>
        <end position="11"/>
    </location>
</feature>
<feature type="compositionally biased region" description="Basic and acidic residues" evidence="6">
    <location>
        <begin position="14"/>
        <end position="23"/>
    </location>
</feature>
<feature type="compositionally biased region" description="Acidic residues" evidence="6">
    <location>
        <begin position="57"/>
        <end position="69"/>
    </location>
</feature>
<feature type="compositionally biased region" description="Basic and acidic residues" evidence="6">
    <location>
        <begin position="608"/>
        <end position="619"/>
    </location>
</feature>
<feature type="compositionally biased region" description="Basic residues" evidence="6">
    <location>
        <begin position="620"/>
        <end position="635"/>
    </location>
</feature>
<feature type="compositionally biased region" description="Acidic residues" evidence="6">
    <location>
        <begin position="644"/>
        <end position="657"/>
    </location>
</feature>
<feature type="compositionally biased region" description="Basic and acidic residues" evidence="6">
    <location>
        <begin position="695"/>
        <end position="712"/>
    </location>
</feature>
<feature type="compositionally biased region" description="Basic and acidic residues" evidence="6">
    <location>
        <begin position="900"/>
        <end position="909"/>
    </location>
</feature>
<feature type="modified residue" description="N-acetylalanine" evidence="1">
    <location>
        <position position="2"/>
    </location>
</feature>
<feature type="modified residue" description="Phosphoserine" evidence="1">
    <location>
        <position position="10"/>
    </location>
</feature>
<feature type="modified residue" description="Phosphoserine" evidence="1">
    <location>
        <position position="16"/>
    </location>
</feature>
<feature type="modified residue" description="Phosphoserine" evidence="1">
    <location>
        <position position="215"/>
    </location>
</feature>
<feature type="modified residue" description="Phosphoserine" evidence="1">
    <location>
        <position position="650"/>
    </location>
</feature>
<feature type="modified residue" description="Phosphothreonine" evidence="1">
    <location>
        <position position="657"/>
    </location>
</feature>
<feature type="modified residue" description="Phosphoserine" evidence="1">
    <location>
        <position position="769"/>
    </location>
</feature>
<feature type="modified residue" description="Phosphoserine" evidence="1">
    <location>
        <position position="795"/>
    </location>
</feature>
<feature type="modified residue" description="Phosphoserine" evidence="1">
    <location>
        <position position="852"/>
    </location>
</feature>
<feature type="modified residue" description="Omega-N-methylarginine" evidence="1">
    <location>
        <position position="906"/>
    </location>
</feature>
<feature type="splice variant" id="VSP_062557" description="In isoform 2.">
    <original>R</original>
    <variation>RPVAGFLSPFDREQTFDSQ</variation>
    <location>
        <position position="243"/>
    </location>
</feature>
<feature type="sequence conflict" description="In Ref. 1; CAH89846." evidence="7" ref="1">
    <original>S</original>
    <variation>T</variation>
    <location>
        <position position="222"/>
    </location>
</feature>
<feature type="sequence conflict" description="In Ref. 1; CAH89846." evidence="7" ref="1">
    <original>C</original>
    <variation>R</variation>
    <location>
        <position position="749"/>
    </location>
</feature>
<dbReference type="EMBL" id="CR857568">
    <property type="protein sequence ID" value="CAH89846.1"/>
    <property type="molecule type" value="mRNA"/>
</dbReference>
<dbReference type="EMBL" id="NDHI03003364">
    <property type="protein sequence ID" value="PNJ82959.1"/>
    <property type="molecule type" value="Genomic_DNA"/>
</dbReference>
<dbReference type="RefSeq" id="NP_001124858.1">
    <property type="nucleotide sequence ID" value="NM_001131386.1"/>
</dbReference>
<dbReference type="SMR" id="Q5REG1"/>
<dbReference type="FunCoup" id="Q5REG1">
    <property type="interactions" value="4663"/>
</dbReference>
<dbReference type="STRING" id="9601.ENSPPYP00000005611"/>
<dbReference type="Ensembl" id="ENSPPYT00000005827.3">
    <property type="protein sequence ID" value="ENSPPYP00000005611.2"/>
    <property type="gene ID" value="ENSPPYG00000004919.3"/>
</dbReference>
<dbReference type="GeneID" id="100171719"/>
<dbReference type="KEGG" id="pon:100171719"/>
<dbReference type="CTD" id="9733"/>
<dbReference type="eggNOG" id="KOG0128">
    <property type="taxonomic scope" value="Eukaryota"/>
</dbReference>
<dbReference type="GeneTree" id="ENSGT00900000141107"/>
<dbReference type="HOGENOM" id="CLU_007172_0_0_1"/>
<dbReference type="InParanoid" id="Q5REG1"/>
<dbReference type="OMA" id="LWARYIL"/>
<dbReference type="OrthoDB" id="360390at2759"/>
<dbReference type="TreeFam" id="TF317554"/>
<dbReference type="Proteomes" id="UP000001595">
    <property type="component" value="Chromosome 12"/>
</dbReference>
<dbReference type="GO" id="GO:0015030">
    <property type="term" value="C:Cajal body"/>
    <property type="evidence" value="ECO:0000250"/>
    <property type="project" value="UniProtKB"/>
</dbReference>
<dbReference type="GO" id="GO:0005737">
    <property type="term" value="C:cytoplasm"/>
    <property type="evidence" value="ECO:0007669"/>
    <property type="project" value="UniProtKB-SubCell"/>
</dbReference>
<dbReference type="GO" id="GO:0016607">
    <property type="term" value="C:nuclear speck"/>
    <property type="evidence" value="ECO:0007669"/>
    <property type="project" value="UniProtKB-SubCell"/>
</dbReference>
<dbReference type="GO" id="GO:0005654">
    <property type="term" value="C:nucleoplasm"/>
    <property type="evidence" value="ECO:0000250"/>
    <property type="project" value="UniProtKB"/>
</dbReference>
<dbReference type="GO" id="GO:0005634">
    <property type="term" value="C:nucleus"/>
    <property type="evidence" value="ECO:0000250"/>
    <property type="project" value="UniProtKB"/>
</dbReference>
<dbReference type="GO" id="GO:0042393">
    <property type="term" value="F:histone binding"/>
    <property type="evidence" value="ECO:0000250"/>
    <property type="project" value="UniProtKB"/>
</dbReference>
<dbReference type="GO" id="GO:0017070">
    <property type="term" value="F:U6 snRNA binding"/>
    <property type="evidence" value="ECO:0000250"/>
    <property type="project" value="UniProtKB"/>
</dbReference>
<dbReference type="GO" id="GO:0030624">
    <property type="term" value="F:U6atac snRNA binding"/>
    <property type="evidence" value="ECO:0000250"/>
    <property type="project" value="UniProtKB"/>
</dbReference>
<dbReference type="GO" id="GO:0000398">
    <property type="term" value="P:mRNA splicing, via spliceosome"/>
    <property type="evidence" value="ECO:0000250"/>
    <property type="project" value="UniProtKB"/>
</dbReference>
<dbReference type="GO" id="GO:0006334">
    <property type="term" value="P:nucleosome assembly"/>
    <property type="evidence" value="ECO:0000250"/>
    <property type="project" value="UniProtKB"/>
</dbReference>
<dbReference type="GO" id="GO:0000387">
    <property type="term" value="P:spliceosomal snRNP assembly"/>
    <property type="evidence" value="ECO:0000250"/>
    <property type="project" value="UniProtKB"/>
</dbReference>
<dbReference type="GO" id="GO:0000244">
    <property type="term" value="P:spliceosomal tri-snRNP complex assembly"/>
    <property type="evidence" value="ECO:0000250"/>
    <property type="project" value="UniProtKB"/>
</dbReference>
<dbReference type="GO" id="GO:0140673">
    <property type="term" value="P:transcription elongation-coupled chromatin remodeling"/>
    <property type="evidence" value="ECO:0000250"/>
    <property type="project" value="UniProtKB"/>
</dbReference>
<dbReference type="CDD" id="cd12391">
    <property type="entry name" value="RRM1_SART3"/>
    <property type="match status" value="1"/>
</dbReference>
<dbReference type="CDD" id="cd12392">
    <property type="entry name" value="RRM2_SART3"/>
    <property type="match status" value="1"/>
</dbReference>
<dbReference type="FunFam" id="1.25.40.10:FF:000098">
    <property type="entry name" value="Squamous cell carcinoma antigen recognized by T-cells 3"/>
    <property type="match status" value="1"/>
</dbReference>
<dbReference type="FunFam" id="3.30.70.330:FF:000229">
    <property type="entry name" value="Squamous cell carcinoma antigen recognized by T-cells 3"/>
    <property type="match status" value="1"/>
</dbReference>
<dbReference type="FunFam" id="1.25.40.10:FF:000081">
    <property type="entry name" value="squamous cell carcinoma antigen recognized by T-cells 3"/>
    <property type="match status" value="1"/>
</dbReference>
<dbReference type="FunFam" id="3.30.70.330:FF:000271">
    <property type="entry name" value="squamous cell carcinoma antigen recognized by T-cells 3"/>
    <property type="match status" value="1"/>
</dbReference>
<dbReference type="Gene3D" id="3.30.70.330">
    <property type="match status" value="2"/>
</dbReference>
<dbReference type="Gene3D" id="1.25.40.10">
    <property type="entry name" value="Tetratricopeptide repeat domain"/>
    <property type="match status" value="2"/>
</dbReference>
<dbReference type="InterPro" id="IPR003107">
    <property type="entry name" value="HAT"/>
</dbReference>
<dbReference type="InterPro" id="IPR008669">
    <property type="entry name" value="LSM_interact"/>
</dbReference>
<dbReference type="InterPro" id="IPR012677">
    <property type="entry name" value="Nucleotide-bd_a/b_plait_sf"/>
</dbReference>
<dbReference type="InterPro" id="IPR035979">
    <property type="entry name" value="RBD_domain_sf"/>
</dbReference>
<dbReference type="InterPro" id="IPR000504">
    <property type="entry name" value="RRM_dom"/>
</dbReference>
<dbReference type="InterPro" id="IPR034217">
    <property type="entry name" value="SART3_RRM1"/>
</dbReference>
<dbReference type="InterPro" id="IPR034218">
    <property type="entry name" value="SART3_RRM2"/>
</dbReference>
<dbReference type="InterPro" id="IPR008847">
    <property type="entry name" value="Suf"/>
</dbReference>
<dbReference type="InterPro" id="IPR011990">
    <property type="entry name" value="TPR-like_helical_dom_sf"/>
</dbReference>
<dbReference type="PANTHER" id="PTHR17204">
    <property type="entry name" value="PRE-MRNA PROCESSING PROTEIN PRP39-RELATED"/>
    <property type="match status" value="1"/>
</dbReference>
<dbReference type="PANTHER" id="PTHR17204:SF25">
    <property type="entry name" value="RRM DOMAIN-CONTAINING PROTEIN"/>
    <property type="match status" value="1"/>
</dbReference>
<dbReference type="Pfam" id="PF16605">
    <property type="entry name" value="LSM_int_assoc"/>
    <property type="match status" value="1"/>
</dbReference>
<dbReference type="Pfam" id="PF05391">
    <property type="entry name" value="Lsm_interact"/>
    <property type="match status" value="1"/>
</dbReference>
<dbReference type="Pfam" id="PF00076">
    <property type="entry name" value="RRM_1"/>
    <property type="match status" value="2"/>
</dbReference>
<dbReference type="Pfam" id="PF05843">
    <property type="entry name" value="Suf"/>
    <property type="match status" value="1"/>
</dbReference>
<dbReference type="SMART" id="SM00386">
    <property type="entry name" value="HAT"/>
    <property type="match status" value="7"/>
</dbReference>
<dbReference type="SMART" id="SM00360">
    <property type="entry name" value="RRM"/>
    <property type="match status" value="2"/>
</dbReference>
<dbReference type="SUPFAM" id="SSF54928">
    <property type="entry name" value="RNA-binding domain, RBD"/>
    <property type="match status" value="2"/>
</dbReference>
<dbReference type="SUPFAM" id="SSF48452">
    <property type="entry name" value="TPR-like"/>
    <property type="match status" value="1"/>
</dbReference>
<dbReference type="PROSITE" id="PS50102">
    <property type="entry name" value="RRM"/>
    <property type="match status" value="2"/>
</dbReference>
<gene>
    <name evidence="7" type="primary">SART3</name>
</gene>
<accession>Q5REG1</accession>
<accession>A0A2J8XLQ2</accession>
<accession>A0A6D2WKD7</accession>
<accession>H2NIJ0</accession>
<organism>
    <name type="scientific">Pongo abelii</name>
    <name type="common">Sumatran orangutan</name>
    <name type="synonym">Pongo pygmaeus abelii</name>
    <dbReference type="NCBI Taxonomy" id="9601"/>
    <lineage>
        <taxon>Eukaryota</taxon>
        <taxon>Metazoa</taxon>
        <taxon>Chordata</taxon>
        <taxon>Craniata</taxon>
        <taxon>Vertebrata</taxon>
        <taxon>Euteleostomi</taxon>
        <taxon>Mammalia</taxon>
        <taxon>Eutheria</taxon>
        <taxon>Euarchontoglires</taxon>
        <taxon>Primates</taxon>
        <taxon>Haplorrhini</taxon>
        <taxon>Catarrhini</taxon>
        <taxon>Hominidae</taxon>
        <taxon>Pongo</taxon>
    </lineage>
</organism>
<keyword id="KW-0007">Acetylation</keyword>
<keyword id="KW-0025">Alternative splicing</keyword>
<keyword id="KW-0175">Coiled coil</keyword>
<keyword id="KW-0963">Cytoplasm</keyword>
<keyword id="KW-0488">Methylation</keyword>
<keyword id="KW-0507">mRNA processing</keyword>
<keyword id="KW-0508">mRNA splicing</keyword>
<keyword id="KW-0539">Nucleus</keyword>
<keyword id="KW-0597">Phosphoprotein</keyword>
<keyword id="KW-1185">Reference proteome</keyword>
<keyword id="KW-0677">Repeat</keyword>
<keyword id="KW-0694">RNA-binding</keyword>
<reference key="1">
    <citation type="submission" date="2004-11" db="EMBL/GenBank/DDBJ databases">
        <authorList>
            <consortium name="The German cDNA consortium"/>
        </authorList>
    </citation>
    <scope>NUCLEOTIDE SEQUENCE [LARGE SCALE MRNA] (ISOFORM 2)</scope>
    <source>
        <tissue>Kidney</tissue>
    </source>
</reference>
<reference evidence="9" key="2">
    <citation type="submission" date="2008-02" db="EMBL/GenBank/DDBJ databases">
        <title>A 6x draft sequence assembly of the Pongo pygmaeus abelii genome.</title>
        <authorList>
            <person name="Wilson R.K."/>
            <person name="Mardis E."/>
        </authorList>
    </citation>
    <scope>NUCLEOTIDE SEQUENCE [LARGE SCALE GENOMIC DNA]</scope>
</reference>
<reference evidence="8" key="3">
    <citation type="submission" date="2017-12" db="EMBL/GenBank/DDBJ databases">
        <title>High-resolution comparative analysis of great ape genomes.</title>
        <authorList>
            <person name="Pollen A."/>
            <person name="Hastie A."/>
            <person name="Hormozdiari F."/>
            <person name="Dougherty M."/>
            <person name="Liu R."/>
            <person name="Chaisson M."/>
            <person name="Hoppe E."/>
            <person name="Hill C."/>
            <person name="Pang A."/>
            <person name="Hillier L."/>
            <person name="Baker C."/>
            <person name="Armstrong J."/>
            <person name="Shendure J."/>
            <person name="Paten B."/>
            <person name="Wilson R."/>
            <person name="Chao H."/>
            <person name="Schneider V."/>
            <person name="Ventura M."/>
            <person name="Kronenberg Z."/>
            <person name="Murali S."/>
            <person name="Gordon D."/>
            <person name="Cantsilieris S."/>
            <person name="Munson K."/>
            <person name="Nelson B."/>
            <person name="Raja A."/>
            <person name="Underwood J."/>
            <person name="Diekhans M."/>
            <person name="Fiddes I."/>
            <person name="Haussler D."/>
            <person name="Eichler E."/>
        </authorList>
    </citation>
    <scope>NUCLEOTIDE SEQUENCE [LARGE SCALE GENOMIC DNA]</scope>
</reference>
<evidence type="ECO:0000250" key="1">
    <source>
        <dbReference type="UniProtKB" id="Q15020"/>
    </source>
</evidence>
<evidence type="ECO:0000250" key="2">
    <source>
        <dbReference type="UniProtKB" id="Q9JLI8"/>
    </source>
</evidence>
<evidence type="ECO:0000255" key="3"/>
<evidence type="ECO:0000255" key="4">
    <source>
        <dbReference type="PROSITE-ProRule" id="PRU00176"/>
    </source>
</evidence>
<evidence type="ECO:0000255" key="5">
    <source>
        <dbReference type="PROSITE-ProRule" id="PRU00768"/>
    </source>
</evidence>
<evidence type="ECO:0000256" key="6">
    <source>
        <dbReference type="SAM" id="MobiDB-lite"/>
    </source>
</evidence>
<evidence type="ECO:0000305" key="7"/>
<evidence type="ECO:0000312" key="8">
    <source>
        <dbReference type="EMBL" id="PNJ82959.1"/>
    </source>
</evidence>
<evidence type="ECO:0000312" key="9">
    <source>
        <dbReference type="Proteomes" id="UP000001595"/>
    </source>
</evidence>
<name>SART3_PONAB</name>